<geneLocation type="chloroplast"/>
<dbReference type="EMBL" id="AP009366">
    <property type="protein sequence ID" value="BAF49796.1"/>
    <property type="molecule type" value="Genomic_DNA"/>
</dbReference>
<dbReference type="RefSeq" id="YP_001122972.1">
    <property type="nucleotide sequence ID" value="NC_009265.1"/>
</dbReference>
<dbReference type="SMR" id="A4QJE1"/>
<dbReference type="GeneID" id="4968566"/>
<dbReference type="GO" id="GO:0009535">
    <property type="term" value="C:chloroplast thylakoid membrane"/>
    <property type="evidence" value="ECO:0007669"/>
    <property type="project" value="UniProtKB-SubCell"/>
</dbReference>
<dbReference type="GO" id="GO:0009523">
    <property type="term" value="C:photosystem II"/>
    <property type="evidence" value="ECO:0007669"/>
    <property type="project" value="UniProtKB-KW"/>
</dbReference>
<dbReference type="GO" id="GO:0016168">
    <property type="term" value="F:chlorophyll binding"/>
    <property type="evidence" value="ECO:0007669"/>
    <property type="project" value="UniProtKB-UniRule"/>
</dbReference>
<dbReference type="GO" id="GO:0045156">
    <property type="term" value="F:electron transporter, transferring electrons within the cyclic electron transport pathway of photosynthesis activity"/>
    <property type="evidence" value="ECO:0007669"/>
    <property type="project" value="InterPro"/>
</dbReference>
<dbReference type="GO" id="GO:0009772">
    <property type="term" value="P:photosynthetic electron transport in photosystem II"/>
    <property type="evidence" value="ECO:0007669"/>
    <property type="project" value="InterPro"/>
</dbReference>
<dbReference type="FunFam" id="3.10.680.10:FF:000001">
    <property type="entry name" value="Photosystem II CP47 reaction center protein"/>
    <property type="match status" value="1"/>
</dbReference>
<dbReference type="Gene3D" id="3.10.680.10">
    <property type="entry name" value="Photosystem II CP47 reaction center protein"/>
    <property type="match status" value="1"/>
</dbReference>
<dbReference type="HAMAP" id="MF_01495">
    <property type="entry name" value="PSII_PsbB_CP47"/>
    <property type="match status" value="1"/>
</dbReference>
<dbReference type="InterPro" id="IPR000932">
    <property type="entry name" value="PS_antenna-like"/>
</dbReference>
<dbReference type="InterPro" id="IPR036001">
    <property type="entry name" value="PS_II_antenna-like_sf"/>
</dbReference>
<dbReference type="InterPro" id="IPR017486">
    <property type="entry name" value="PSII_PsbB"/>
</dbReference>
<dbReference type="NCBIfam" id="TIGR03039">
    <property type="entry name" value="PS_II_CP47"/>
    <property type="match status" value="1"/>
</dbReference>
<dbReference type="PANTHER" id="PTHR33180">
    <property type="entry name" value="PHOTOSYSTEM II CP43 REACTION CENTER PROTEIN"/>
    <property type="match status" value="1"/>
</dbReference>
<dbReference type="PANTHER" id="PTHR33180:SF37">
    <property type="entry name" value="PHOTOSYSTEM II CP43 REACTION CENTER PROTEIN"/>
    <property type="match status" value="1"/>
</dbReference>
<dbReference type="Pfam" id="PF00421">
    <property type="entry name" value="PSII"/>
    <property type="match status" value="1"/>
</dbReference>
<dbReference type="SUPFAM" id="SSF161077">
    <property type="entry name" value="Photosystem II antenna protein-like"/>
    <property type="match status" value="1"/>
</dbReference>
<feature type="chain" id="PRO_0000359791" description="Photosystem II CP47 reaction center protein">
    <location>
        <begin position="1"/>
        <end position="508"/>
    </location>
</feature>
<feature type="transmembrane region" description="Helical" evidence="1">
    <location>
        <begin position="21"/>
        <end position="36"/>
    </location>
</feature>
<feature type="transmembrane region" description="Helical" evidence="1">
    <location>
        <begin position="101"/>
        <end position="115"/>
    </location>
</feature>
<feature type="transmembrane region" description="Helical" evidence="1">
    <location>
        <begin position="140"/>
        <end position="156"/>
    </location>
</feature>
<feature type="transmembrane region" description="Helical" evidence="1">
    <location>
        <begin position="203"/>
        <end position="218"/>
    </location>
</feature>
<feature type="transmembrane region" description="Helical" evidence="1">
    <location>
        <begin position="237"/>
        <end position="252"/>
    </location>
</feature>
<feature type="transmembrane region" description="Helical" evidence="1">
    <location>
        <begin position="457"/>
        <end position="472"/>
    </location>
</feature>
<organism>
    <name type="scientific">Aethionema cordifolium</name>
    <name type="common">Lebanon stonecress</name>
    <dbReference type="NCBI Taxonomy" id="434059"/>
    <lineage>
        <taxon>Eukaryota</taxon>
        <taxon>Viridiplantae</taxon>
        <taxon>Streptophyta</taxon>
        <taxon>Embryophyta</taxon>
        <taxon>Tracheophyta</taxon>
        <taxon>Spermatophyta</taxon>
        <taxon>Magnoliopsida</taxon>
        <taxon>eudicotyledons</taxon>
        <taxon>Gunneridae</taxon>
        <taxon>Pentapetalae</taxon>
        <taxon>rosids</taxon>
        <taxon>malvids</taxon>
        <taxon>Brassicales</taxon>
        <taxon>Brassicaceae</taxon>
        <taxon>Aethionemeae</taxon>
        <taxon>Aethionema</taxon>
    </lineage>
</organism>
<evidence type="ECO:0000255" key="1">
    <source>
        <dbReference type="HAMAP-Rule" id="MF_01495"/>
    </source>
</evidence>
<gene>
    <name evidence="1" type="primary">psbB</name>
</gene>
<keyword id="KW-0148">Chlorophyll</keyword>
<keyword id="KW-0150">Chloroplast</keyword>
<keyword id="KW-0157">Chromophore</keyword>
<keyword id="KW-0472">Membrane</keyword>
<keyword id="KW-0602">Photosynthesis</keyword>
<keyword id="KW-0604">Photosystem II</keyword>
<keyword id="KW-0934">Plastid</keyword>
<keyword id="KW-0793">Thylakoid</keyword>
<keyword id="KW-0812">Transmembrane</keyword>
<keyword id="KW-1133">Transmembrane helix</keyword>
<comment type="function">
    <text evidence="1">One of the components of the core complex of photosystem II (PSII). It binds chlorophyll and helps catalyze the primary light-induced photochemical processes of PSII. PSII is a light-driven water:plastoquinone oxidoreductase, using light energy to abstract electrons from H(2)O, generating O(2) and a proton gradient subsequently used for ATP formation.</text>
</comment>
<comment type="cofactor">
    <text evidence="1">Binds multiple chlorophylls. PSII binds additional chlorophylls, carotenoids and specific lipids.</text>
</comment>
<comment type="subunit">
    <text evidence="1">PSII is composed of 1 copy each of membrane proteins PsbA, PsbB, PsbC, PsbD, PsbE, PsbF, PsbH, PsbI, PsbJ, PsbK, PsbL, PsbM, PsbT, PsbX, PsbY, PsbZ, Psb30/Ycf12, at least 3 peripheral proteins of the oxygen-evolving complex and a large number of cofactors. It forms dimeric complexes.</text>
</comment>
<comment type="subcellular location">
    <subcellularLocation>
        <location evidence="1">Plastid</location>
        <location evidence="1">Chloroplast thylakoid membrane</location>
        <topology evidence="1">Multi-pass membrane protein</topology>
    </subcellularLocation>
</comment>
<comment type="similarity">
    <text evidence="1">Belongs to the PsbB/PsbC family. PsbB subfamily.</text>
</comment>
<protein>
    <recommendedName>
        <fullName evidence="1">Photosystem II CP47 reaction center protein</fullName>
    </recommendedName>
    <alternativeName>
        <fullName evidence="1">PSII 47 kDa protein</fullName>
    </alternativeName>
    <alternativeName>
        <fullName evidence="1">Protein CP-47</fullName>
    </alternativeName>
</protein>
<reference key="1">
    <citation type="submission" date="2007-03" db="EMBL/GenBank/DDBJ databases">
        <title>Sequencing analysis of Aethionema coridifolium chloroplast DNA.</title>
        <authorList>
            <person name="Hosouchi T."/>
            <person name="Tsuruoka H."/>
            <person name="Kotani H."/>
        </authorList>
    </citation>
    <scope>NUCLEOTIDE SEQUENCE [LARGE SCALE GENOMIC DNA]</scope>
</reference>
<name>PSBB_AETCO</name>
<proteinExistence type="inferred from homology"/>
<sequence>MGLPWYRVHTVVLNDPGRLLSVHIMHTALVAGWAGSMALYELAVFDPSDPVLDPMWRQGMFVIPFMTRLGITNSWGGWNITGGTITNPGLWSYEGVAGAHIVFSGLCFLAAIWHWVYWDLEIFCDERTGKPSLDLPKIFGIHLFLSGVACFGFGAFHVTGLYGPGIWVSDPYGLTGKVQPVNPAWGVEGFDPFVPGGIASHHIAAGTLGILAGLFHLSVRPPQRLYKGLRMGNIETVLSSSIAAVFFAAFVVAGTMWYGSATTPIELFGPTRYQWDQGYFQQEIYRRVSAGLAENPSLSEVWSKIPEKLAFYDYIGNNPAKGGLFRAGSMDNGDGIAVGWLGHPVFRNKEGRELFVRRMPTFFETFPVVLVDGDGIVRADVPFRRAESKYSVEQVGVTVEFYGGELNGVSYSDPATVKKYARRAQLGEIFELDRATLKSDGVFRSSPRGWFTFGHASFALLFFFGHIWHGARTLFRDVFAGIDPDLDAQVEFGAFQKLGDPTTKRQAV</sequence>
<accession>A4QJE1</accession>